<dbReference type="EC" id="2.3.1.-"/>
<dbReference type="EMBL" id="U30612">
    <property type="protein sequence ID" value="AAB05020.1"/>
    <property type="molecule type" value="Genomic_DNA"/>
</dbReference>
<dbReference type="EMBL" id="CP000133">
    <property type="protein sequence ID" value="ABC90666.1"/>
    <property type="status" value="ALT_INIT"/>
    <property type="molecule type" value="Genomic_DNA"/>
</dbReference>
<dbReference type="SMR" id="Q52728"/>
<dbReference type="ESTHER" id="rhiet-phbc">
    <property type="family name" value="PHA_synth_I"/>
</dbReference>
<dbReference type="KEGG" id="ret:RHE_CH01875"/>
<dbReference type="eggNOG" id="COG3243">
    <property type="taxonomic scope" value="Bacteria"/>
</dbReference>
<dbReference type="HOGENOM" id="CLU_017387_1_0_5"/>
<dbReference type="OrthoDB" id="7208816at2"/>
<dbReference type="UniPathway" id="UPA00917"/>
<dbReference type="Proteomes" id="UP000001936">
    <property type="component" value="Chromosome"/>
</dbReference>
<dbReference type="GO" id="GO:0005737">
    <property type="term" value="C:cytoplasm"/>
    <property type="evidence" value="ECO:0007669"/>
    <property type="project" value="UniProtKB-SubCell"/>
</dbReference>
<dbReference type="GO" id="GO:0016746">
    <property type="term" value="F:acyltransferase activity"/>
    <property type="evidence" value="ECO:0007669"/>
    <property type="project" value="UniProtKB-KW"/>
</dbReference>
<dbReference type="GO" id="GO:0042619">
    <property type="term" value="P:poly-hydroxybutyrate biosynthetic process"/>
    <property type="evidence" value="ECO:0007669"/>
    <property type="project" value="UniProtKB-KW"/>
</dbReference>
<dbReference type="Gene3D" id="3.40.50.1820">
    <property type="entry name" value="alpha/beta hydrolase"/>
    <property type="match status" value="1"/>
</dbReference>
<dbReference type="InterPro" id="IPR029058">
    <property type="entry name" value="AB_hydrolase_fold"/>
</dbReference>
<dbReference type="InterPro" id="IPR051321">
    <property type="entry name" value="PHA/PHB_synthase"/>
</dbReference>
<dbReference type="InterPro" id="IPR010963">
    <property type="entry name" value="PHA_synth_I"/>
</dbReference>
<dbReference type="InterPro" id="IPR010941">
    <property type="entry name" value="PhaC_N"/>
</dbReference>
<dbReference type="NCBIfam" id="TIGR01838">
    <property type="entry name" value="PHA_synth_I"/>
    <property type="match status" value="1"/>
</dbReference>
<dbReference type="PANTHER" id="PTHR36837">
    <property type="entry name" value="POLY(3-HYDROXYALKANOATE) POLYMERASE SUBUNIT PHAC"/>
    <property type="match status" value="1"/>
</dbReference>
<dbReference type="PANTHER" id="PTHR36837:SF5">
    <property type="entry name" value="POLY-3-HYDROXYBUTYRATE SYNTHASE"/>
    <property type="match status" value="1"/>
</dbReference>
<dbReference type="Pfam" id="PF07167">
    <property type="entry name" value="PhaC_N"/>
    <property type="match status" value="1"/>
</dbReference>
<dbReference type="SUPFAM" id="SSF53474">
    <property type="entry name" value="alpha/beta-Hydrolases"/>
    <property type="match status" value="1"/>
</dbReference>
<protein>
    <recommendedName>
        <fullName>Poly(3-hydroxyalkanoate) polymerase subunit PhaC</fullName>
        <shortName>PHA polymerase</shortName>
        <ecNumber>2.3.1.-</ecNumber>
    </recommendedName>
    <alternativeName>
        <fullName>PHB synthase subunit PhaC</fullName>
    </alternativeName>
    <alternativeName>
        <fullName>Poly(3-hydroxybutyrate) polymerase subunit PhaC</fullName>
        <shortName>PHB polymerase</shortName>
        <shortName>Poly-beta-hydroxybutyrate polymerase</shortName>
    </alternativeName>
    <alternativeName>
        <fullName>Polyhydroxyalkanoic acid synthase subunit PhaC</fullName>
        <shortName>PHA synthase</shortName>
    </alternativeName>
</protein>
<keyword id="KW-0012">Acyltransferase</keyword>
<keyword id="KW-0963">Cytoplasm</keyword>
<keyword id="KW-0583">PHB biosynthesis</keyword>
<keyword id="KW-1185">Reference proteome</keyword>
<keyword id="KW-0808">Transferase</keyword>
<comment type="function">
    <text>Polymerizes D(-)-3-hydroxybutyryl-CoA to create PHB which consists of thousands of hydroxybutyrate molecules linked end to end. PHB serves as an intracellular energy reserve material when cells grow under conditions of nutrient limitation.</text>
</comment>
<comment type="catalytic activity">
    <reaction evidence="2">
        <text>(3R)-3-hydroxybutanoyl-CoA + [(3R)-hydroxybutanoate](n) = [(3R)-hydroxybutanoate](n+1) + CoA</text>
        <dbReference type="Rhea" id="RHEA:15405"/>
        <dbReference type="Rhea" id="RHEA-COMP:14464"/>
        <dbReference type="Rhea" id="RHEA-COMP:14465"/>
        <dbReference type="ChEBI" id="CHEBI:8298"/>
        <dbReference type="ChEBI" id="CHEBI:57287"/>
        <dbReference type="ChEBI" id="CHEBI:57315"/>
    </reaction>
</comment>
<comment type="pathway">
    <text>Biopolymer metabolism; poly-(R)-3-hydroxybutanoate biosynthesis.</text>
</comment>
<comment type="subcellular location">
    <subcellularLocation>
        <location evidence="1">Cytoplasm</location>
    </subcellularLocation>
</comment>
<comment type="similarity">
    <text evidence="6">Belongs to the PHA/PHB synthase family. Type I PhaC subfamily.</text>
</comment>
<comment type="sequence caution" evidence="6">
    <conflict type="erroneous initiation">
        <sequence resource="EMBL-CDS" id="ABC90666"/>
    </conflict>
    <text>Truncated N-terminus.</text>
</comment>
<sequence length="636" mass="71936">MYNKRIKRVLPPEEMVTDSKQESGGQKNGDKTGFDATDLKPYLLKDPETMAMNFARALENLGQAASAWLAPRERGEITETAIDPMTDMVKTLSKISEYWISDPRRTFEAQTQLMSSFFGIWMRSMQRMQGTRGMQGEPLPPEPDTRKDKRFSDEDWQKNPFFDFLRQVYFVTSDWVDKLVSETDGLDEHTKHKAGFYVKQITAALSPSNFIATNPQLYRETIASNGENLVRGMKMLAEDIAAGKGELRLRQTDMTKFAVGRDMALTPGKVIAQNDICQIIQYEASTETVLKRPLLICPPWINKFYILDLNPQKSFIKWCVDQGQTVFVISWVNPDGRHAEKDWAAYAREGIDFALETIEKATGEKEVNAVGYCVGGTLLAATLALHAKEKNKRIKTATLFTTQVDFTHAGDLKVFVDEEQLAALEEHMQAAGYLDGSKMSMAFNMLRASELIWPYFVNSYLKGQEPLPFDLLFWNADSTRMAAANHAFYLRNCYLRNALTQNEMILDGKRISLKDVKIPIYNLATREDHIAPAKSVFLGSRFFGGKVEFVVTGSGHIAGVVNPPDKRKYQFWTGGPAKGEYETWLEQASETPGSWWPHWQAWIETHDGRRVAARKPGGDALNAIEEAPGSYVMERT</sequence>
<proteinExistence type="inferred from homology"/>
<name>PHAC_RHIEC</name>
<gene>
    <name evidence="5" type="primary">phaC</name>
    <name type="synonym">phbC</name>
    <name type="ordered locus">RHE_CH01875</name>
</gene>
<accession>Q52728</accession>
<accession>Q2K920</accession>
<feature type="chain" id="PRO_0000215471" description="Poly(3-hydroxyalkanoate) polymerase subunit PhaC">
    <location>
        <begin position="1"/>
        <end position="636"/>
    </location>
</feature>
<feature type="region of interest" description="Disordered" evidence="4">
    <location>
        <begin position="1"/>
        <end position="38"/>
    </location>
</feature>
<feature type="region of interest" description="Disordered" evidence="4">
    <location>
        <begin position="129"/>
        <end position="152"/>
    </location>
</feature>
<feature type="compositionally biased region" description="Basic and acidic residues" evidence="4">
    <location>
        <begin position="143"/>
        <end position="152"/>
    </location>
</feature>
<feature type="active site" evidence="3">
    <location>
        <position position="373"/>
    </location>
</feature>
<evidence type="ECO:0000250" key="1"/>
<evidence type="ECO:0000250" key="2">
    <source>
        <dbReference type="UniProtKB" id="P45370"/>
    </source>
</evidence>
<evidence type="ECO:0000255" key="3"/>
<evidence type="ECO:0000256" key="4">
    <source>
        <dbReference type="SAM" id="MobiDB-lite"/>
    </source>
</evidence>
<evidence type="ECO:0000303" key="5">
    <source>
    </source>
</evidence>
<evidence type="ECO:0000305" key="6"/>
<organism>
    <name type="scientific">Rhizobium etli (strain ATCC 51251 / DSM 11541 / JCM 21823 / NBRC 15573 / CFN 42)</name>
    <dbReference type="NCBI Taxonomy" id="347834"/>
    <lineage>
        <taxon>Bacteria</taxon>
        <taxon>Pseudomonadati</taxon>
        <taxon>Pseudomonadota</taxon>
        <taxon>Alphaproteobacteria</taxon>
        <taxon>Hyphomicrobiales</taxon>
        <taxon>Rhizobiaceae</taxon>
        <taxon>Rhizobium/Agrobacterium group</taxon>
        <taxon>Rhizobium</taxon>
    </lineage>
</organism>
<reference key="1">
    <citation type="journal article" date="1996" name="J. Bacteriol.">
        <title>Genetic and physiological characterization of a Rhizobium etli mutant strain unable to synthesize poly-beta-hydroxybutyrate.</title>
        <authorList>
            <person name="Cevallos M.A."/>
            <person name="Encarnacion S."/>
            <person name="Leija A."/>
            <person name="Mora Y."/>
            <person name="Mora J."/>
        </authorList>
    </citation>
    <scope>NUCLEOTIDE SEQUENCE [GENOMIC DNA]</scope>
    <source>
        <strain>CE3</strain>
    </source>
</reference>
<reference key="2">
    <citation type="journal article" date="2006" name="Proc. Natl. Acad. Sci. U.S.A.">
        <title>The partitioned Rhizobium etli genome: genetic and metabolic redundancy in seven interacting replicons.</title>
        <authorList>
            <person name="Gonzalez V."/>
            <person name="Santamaria R.I."/>
            <person name="Bustos P."/>
            <person name="Hernandez-Gonzalez I."/>
            <person name="Medrano-Soto A."/>
            <person name="Moreno-Hagelsieb G."/>
            <person name="Janga S.C."/>
            <person name="Ramirez M.A."/>
            <person name="Jimenez-Jacinto V."/>
            <person name="Collado-Vides J."/>
            <person name="Davila G."/>
        </authorList>
    </citation>
    <scope>NUCLEOTIDE SEQUENCE [LARGE SCALE GENOMIC DNA]</scope>
    <source>
        <strain>ATCC 51251 / DSM 11541 / JCM 21823 / NBRC 15573 / CFN 42</strain>
    </source>
</reference>